<name>VSP1_DABRR</name>
<sequence length="16" mass="1728">VIGGDECNINEHPFLA</sequence>
<dbReference type="EC" id="3.4.21.-"/>
<dbReference type="GO" id="GO:0005576">
    <property type="term" value="C:extracellular region"/>
    <property type="evidence" value="ECO:0007669"/>
    <property type="project" value="UniProtKB-SubCell"/>
</dbReference>
<dbReference type="GO" id="GO:0008236">
    <property type="term" value="F:serine-type peptidase activity"/>
    <property type="evidence" value="ECO:0007669"/>
    <property type="project" value="UniProtKB-KW"/>
</dbReference>
<dbReference type="GO" id="GO:0090729">
    <property type="term" value="F:toxin activity"/>
    <property type="evidence" value="ECO:0007669"/>
    <property type="project" value="UniProtKB-KW"/>
</dbReference>
<dbReference type="GO" id="GO:0006508">
    <property type="term" value="P:proteolysis"/>
    <property type="evidence" value="ECO:0007669"/>
    <property type="project" value="UniProtKB-KW"/>
</dbReference>
<evidence type="ECO:0000250" key="1">
    <source>
        <dbReference type="UniProtKB" id="P09872"/>
    </source>
</evidence>
<evidence type="ECO:0000255" key="2">
    <source>
        <dbReference type="PROSITE-ProRule" id="PRU00274"/>
    </source>
</evidence>
<evidence type="ECO:0000269" key="3">
    <source>
    </source>
</evidence>
<evidence type="ECO:0000303" key="4">
    <source>
    </source>
</evidence>
<evidence type="ECO:0000305" key="5"/>
<evidence type="ECO:0000305" key="6">
    <source>
    </source>
</evidence>
<feature type="chain" id="PRO_0000394726" description="Vipera russelli proteinase RVV-V homolog 1">
    <location>
        <begin position="1"/>
        <end position="16" status="greater than"/>
    </location>
</feature>
<feature type="disulfide bond" evidence="1 2">
    <location>
        <begin position="7"/>
        <end status="unknown"/>
    </location>
</feature>
<feature type="non-terminal residue" evidence="4">
    <location>
        <position position="16"/>
    </location>
</feature>
<comment type="function">
    <text evidence="5">Snake venom serine protease that may act in the hemostasis system of the prey.</text>
</comment>
<comment type="subcellular location">
    <subcellularLocation>
        <location evidence="3">Secreted</location>
    </subcellularLocation>
</comment>
<comment type="tissue specificity">
    <text evidence="6">Expressed by the venom gland.</text>
</comment>
<comment type="similarity">
    <text evidence="5">Belongs to the peptidase S1 family. Snake venom subfamily.</text>
</comment>
<organism>
    <name type="scientific">Daboia russelii</name>
    <name type="common">Russel's viper</name>
    <name type="synonym">Vipera russelii</name>
    <dbReference type="NCBI Taxonomy" id="8707"/>
    <lineage>
        <taxon>Eukaryota</taxon>
        <taxon>Metazoa</taxon>
        <taxon>Chordata</taxon>
        <taxon>Craniata</taxon>
        <taxon>Vertebrata</taxon>
        <taxon>Euteleostomi</taxon>
        <taxon>Lepidosauria</taxon>
        <taxon>Squamata</taxon>
        <taxon>Bifurcata</taxon>
        <taxon>Unidentata</taxon>
        <taxon>Episquamata</taxon>
        <taxon>Toxicofera</taxon>
        <taxon>Serpentes</taxon>
        <taxon>Colubroidea</taxon>
        <taxon>Viperidae</taxon>
        <taxon>Viperinae</taxon>
        <taxon>Daboia</taxon>
    </lineage>
</organism>
<accession>P86530</accession>
<reference evidence="5" key="1">
    <citation type="journal article" date="2010" name="Biomed. Res.">
        <title>Molecular diversity in venom proteins of the Russell's viper (Daboia russellii russellii) and the Indian cobra (Naja naja) in Sri Lanka.</title>
        <authorList>
            <person name="Suzuki M."/>
            <person name="Itoh T."/>
            <person name="Bandaranayake B.M.A.I.K."/>
            <person name="Ranasinghe J.G."/>
            <person name="Athauda S.B."/>
            <person name="Moriyama A."/>
        </authorList>
    </citation>
    <scope>PROTEIN SEQUENCE</scope>
    <scope>SUBCELLULAR LOCATION</scope>
    <source>
        <tissue evidence="3">Venom</tissue>
    </source>
</reference>
<proteinExistence type="evidence at protein level"/>
<protein>
    <recommendedName>
        <fullName>Vipera russelli proteinase RVV-V homolog 1</fullName>
        <shortName evidence="4">RVV-V 1</shortName>
        <ecNumber>3.4.21.-</ecNumber>
    </recommendedName>
    <alternativeName>
        <fullName>Snake venom serine protease</fullName>
        <shortName>SVSP</shortName>
    </alternativeName>
</protein>
<keyword id="KW-0903">Direct protein sequencing</keyword>
<keyword id="KW-1015">Disulfide bond</keyword>
<keyword id="KW-1199">Hemostasis impairing toxin</keyword>
<keyword id="KW-0378">Hydrolase</keyword>
<keyword id="KW-0645">Protease</keyword>
<keyword id="KW-0964">Secreted</keyword>
<keyword id="KW-0720">Serine protease</keyword>
<keyword id="KW-0800">Toxin</keyword>